<dbReference type="EMBL" id="AF218807">
    <property type="protein sequence ID" value="AAF32325.1"/>
    <property type="molecule type" value="mRNA"/>
</dbReference>
<dbReference type="EMBL" id="AB011474">
    <property type="protein sequence ID" value="BAB10421.1"/>
    <property type="molecule type" value="Genomic_DNA"/>
</dbReference>
<dbReference type="EMBL" id="CP002688">
    <property type="protein sequence ID" value="AED98167.1"/>
    <property type="molecule type" value="Genomic_DNA"/>
</dbReference>
<dbReference type="EMBL" id="AY035089">
    <property type="protein sequence ID" value="AAK59594.1"/>
    <property type="molecule type" value="mRNA"/>
</dbReference>
<dbReference type="EMBL" id="AY051036">
    <property type="protein sequence ID" value="AAK93713.1"/>
    <property type="molecule type" value="mRNA"/>
</dbReference>
<dbReference type="RefSeq" id="NP_201417.1">
    <molecule id="Q9M622-1"/>
    <property type="nucleotide sequence ID" value="NM_126014.4"/>
</dbReference>
<dbReference type="PDB" id="7BVW">
    <property type="method" value="X-ray"/>
    <property type="resolution" value="2.10 A"/>
    <property type="chains" value="A/B=206-283"/>
</dbReference>
<dbReference type="PDBsum" id="7BVW"/>
<dbReference type="SMR" id="Q9M622"/>
<dbReference type="BioGRID" id="21990">
    <property type="interactions" value="12"/>
</dbReference>
<dbReference type="FunCoup" id="Q9M622">
    <property type="interactions" value="3924"/>
</dbReference>
<dbReference type="IntAct" id="Q9M622">
    <property type="interactions" value="13"/>
</dbReference>
<dbReference type="STRING" id="3702.Q9M622"/>
<dbReference type="GlyCosmos" id="Q9M622">
    <property type="glycosylation" value="1 site, No reported glycans"/>
</dbReference>
<dbReference type="GlyGen" id="Q9M622">
    <property type="glycosylation" value="1 site"/>
</dbReference>
<dbReference type="iPTMnet" id="Q9M622"/>
<dbReference type="PaxDb" id="3702-AT5G66160.1"/>
<dbReference type="ProteomicsDB" id="228213">
    <molecule id="Q9M622-1"/>
</dbReference>
<dbReference type="EnsemblPlants" id="AT5G66160.1">
    <molecule id="Q9M622-1"/>
    <property type="protein sequence ID" value="AT5G66160.1"/>
    <property type="gene ID" value="AT5G66160"/>
</dbReference>
<dbReference type="GeneID" id="836748"/>
<dbReference type="Gramene" id="AT5G66160.1">
    <molecule id="Q9M622-1"/>
    <property type="protein sequence ID" value="AT5G66160.1"/>
    <property type="gene ID" value="AT5G66160"/>
</dbReference>
<dbReference type="KEGG" id="ath:AT5G66160"/>
<dbReference type="Araport" id="AT5G66160"/>
<dbReference type="TAIR" id="AT5G66160">
    <property type="gene designation" value="RMR1"/>
</dbReference>
<dbReference type="eggNOG" id="KOG4628">
    <property type="taxonomic scope" value="Eukaryota"/>
</dbReference>
<dbReference type="InParanoid" id="Q9M622"/>
<dbReference type="OMA" id="PSYDANT"/>
<dbReference type="PhylomeDB" id="Q9M622"/>
<dbReference type="PRO" id="PR:Q9M622"/>
<dbReference type="Proteomes" id="UP000006548">
    <property type="component" value="Chromosome 5"/>
</dbReference>
<dbReference type="ExpressionAtlas" id="Q9M622">
    <property type="expression patterns" value="baseline and differential"/>
</dbReference>
<dbReference type="GO" id="GO:0005783">
    <property type="term" value="C:endoplasmic reticulum"/>
    <property type="evidence" value="ECO:0000314"/>
    <property type="project" value="TAIR"/>
</dbReference>
<dbReference type="GO" id="GO:0000139">
    <property type="term" value="C:Golgi membrane"/>
    <property type="evidence" value="ECO:0007669"/>
    <property type="project" value="UniProtKB-SubCell"/>
</dbReference>
<dbReference type="GO" id="GO:0032586">
    <property type="term" value="C:protein storage vacuole membrane"/>
    <property type="evidence" value="ECO:0007669"/>
    <property type="project" value="UniProtKB-SubCell"/>
</dbReference>
<dbReference type="GO" id="GO:0000976">
    <property type="term" value="F:transcription cis-regulatory region binding"/>
    <property type="evidence" value="ECO:0000353"/>
    <property type="project" value="TAIR"/>
</dbReference>
<dbReference type="GO" id="GO:0008270">
    <property type="term" value="F:zinc ion binding"/>
    <property type="evidence" value="ECO:0007669"/>
    <property type="project" value="UniProtKB-KW"/>
</dbReference>
<dbReference type="GO" id="GO:0006886">
    <property type="term" value="P:intracellular protein transport"/>
    <property type="evidence" value="ECO:0000314"/>
    <property type="project" value="TAIR"/>
</dbReference>
<dbReference type="CDD" id="cd02123">
    <property type="entry name" value="PA_C_RZF_like"/>
    <property type="match status" value="1"/>
</dbReference>
<dbReference type="FunFam" id="3.50.30.30:FF:000020">
    <property type="entry name" value="Receptor homology region transmembrane domain-and RING domain-containing protein 2"/>
    <property type="match status" value="1"/>
</dbReference>
<dbReference type="FunFam" id="3.30.40.10:FF:001050">
    <property type="entry name" value="Receptor homology region, transmembrane domain- and RING domain-containing protein 1"/>
    <property type="match status" value="1"/>
</dbReference>
<dbReference type="Gene3D" id="3.50.30.30">
    <property type="match status" value="1"/>
</dbReference>
<dbReference type="Gene3D" id="3.30.40.10">
    <property type="entry name" value="Zinc/RING finger domain, C3HC4 (zinc finger)"/>
    <property type="match status" value="1"/>
</dbReference>
<dbReference type="InterPro" id="IPR051653">
    <property type="entry name" value="E3_ligase_sorting_rcpt"/>
</dbReference>
<dbReference type="InterPro" id="IPR046450">
    <property type="entry name" value="PA_dom_sf"/>
</dbReference>
<dbReference type="InterPro" id="IPR003137">
    <property type="entry name" value="PA_domain"/>
</dbReference>
<dbReference type="InterPro" id="IPR001841">
    <property type="entry name" value="Znf_RING"/>
</dbReference>
<dbReference type="InterPro" id="IPR013083">
    <property type="entry name" value="Znf_RING/FYVE/PHD"/>
</dbReference>
<dbReference type="InterPro" id="IPR044744">
    <property type="entry name" value="ZNRF4/RNF13/RNF167_PA"/>
</dbReference>
<dbReference type="PANTHER" id="PTHR47168">
    <property type="entry name" value="RING ZINC FINGER DOMAIN SUPERFAMILY PROTEIN-RELATED"/>
    <property type="match status" value="1"/>
</dbReference>
<dbReference type="PANTHER" id="PTHR47168:SF5">
    <property type="entry name" value="RING-TYPE DOMAIN-CONTAINING PROTEIN"/>
    <property type="match status" value="1"/>
</dbReference>
<dbReference type="Pfam" id="PF02225">
    <property type="entry name" value="PA"/>
    <property type="match status" value="1"/>
</dbReference>
<dbReference type="Pfam" id="PF13639">
    <property type="entry name" value="zf-RING_2"/>
    <property type="match status" value="1"/>
</dbReference>
<dbReference type="SMART" id="SM00184">
    <property type="entry name" value="RING"/>
    <property type="match status" value="1"/>
</dbReference>
<dbReference type="SUPFAM" id="SSF52025">
    <property type="entry name" value="PA domain"/>
    <property type="match status" value="1"/>
</dbReference>
<dbReference type="SUPFAM" id="SSF57850">
    <property type="entry name" value="RING/U-box"/>
    <property type="match status" value="1"/>
</dbReference>
<dbReference type="PROSITE" id="PS50089">
    <property type="entry name" value="ZF_RING_2"/>
    <property type="match status" value="1"/>
</dbReference>
<protein>
    <recommendedName>
        <fullName>Receptor homology region, transmembrane domain- and RING domain-containing protein 1</fullName>
        <shortName>AtRMR1</shortName>
    </recommendedName>
    <alternativeName>
        <fullName>ReMembR-H2 protein JR700</fullName>
    </alternativeName>
</protein>
<keyword id="KW-0002">3D-structure</keyword>
<keyword id="KW-0025">Alternative splicing</keyword>
<keyword id="KW-1015">Disulfide bond</keyword>
<keyword id="KW-0325">Glycoprotein</keyword>
<keyword id="KW-0333">Golgi apparatus</keyword>
<keyword id="KW-0472">Membrane</keyword>
<keyword id="KW-0479">Metal-binding</keyword>
<keyword id="KW-0653">Protein transport</keyword>
<keyword id="KW-0675">Receptor</keyword>
<keyword id="KW-1185">Reference proteome</keyword>
<keyword id="KW-0732">Signal</keyword>
<keyword id="KW-0812">Transmembrane</keyword>
<keyword id="KW-1133">Transmembrane helix</keyword>
<keyword id="KW-0813">Transport</keyword>
<keyword id="KW-0926">Vacuole</keyword>
<keyword id="KW-0862">Zinc</keyword>
<keyword id="KW-0863">Zinc-finger</keyword>
<accession>Q9M622</accession>
<name>RMR1_ARATH</name>
<comment type="function">
    <text evidence="4 5 6">Involved in the trafficking of vacuolar proteins. Functions probably as a sorting receptor for protein trafficking to the protein storage vacuole (PSV) by binding the C-terminal vacuolar sorting determinant (VSD) of vacuolar-sorted proteins.</text>
</comment>
<comment type="subcellular location">
    <subcellularLocation>
        <location>Prevacuolar compartment membrane</location>
    </subcellularLocation>
    <subcellularLocation>
        <location>Protein storage vacuole membrane</location>
    </subcellularLocation>
    <subcellularLocation>
        <location evidence="7">Golgi apparatus membrane</location>
        <topology evidence="7">Single-pass type I membrane protein</topology>
    </subcellularLocation>
    <text>Localizes mainly to the prevacuolar compartment of the protein storage vacuole, but a minor portion also localizes to the Golgi complex.</text>
</comment>
<comment type="alternative products">
    <event type="alternative splicing"/>
    <isoform>
        <id>Q9M622-1</id>
        <name>1</name>
        <sequence type="displayed"/>
    </isoform>
    <text>A number of isoforms are produced. According to EST sequences.</text>
</comment>
<comment type="tissue specificity">
    <text evidence="4">Expressed in leaves, stems, flowers and siliques.</text>
</comment>
<gene>
    <name type="primary">RMR1</name>
    <name type="synonym">JR700</name>
    <name type="ordered locus">At5g66160</name>
    <name type="ORF">K2A18.24</name>
</gene>
<organism>
    <name type="scientific">Arabidopsis thaliana</name>
    <name type="common">Mouse-ear cress</name>
    <dbReference type="NCBI Taxonomy" id="3702"/>
    <lineage>
        <taxon>Eukaryota</taxon>
        <taxon>Viridiplantae</taxon>
        <taxon>Streptophyta</taxon>
        <taxon>Embryophyta</taxon>
        <taxon>Tracheophyta</taxon>
        <taxon>Spermatophyta</taxon>
        <taxon>Magnoliopsida</taxon>
        <taxon>eudicotyledons</taxon>
        <taxon>Gunneridae</taxon>
        <taxon>Pentapetalae</taxon>
        <taxon>rosids</taxon>
        <taxon>malvids</taxon>
        <taxon>Brassicales</taxon>
        <taxon>Brassicaceae</taxon>
        <taxon>Camelineae</taxon>
        <taxon>Arabidopsis</taxon>
    </lineage>
</organism>
<reference key="1">
    <citation type="journal article" date="2000" name="J. Cell Biol.">
        <title>Biogenesis of the protein storage vacuole crystalloid.</title>
        <authorList>
            <person name="Jiang L."/>
            <person name="Phillips T.E."/>
            <person name="Rogers S.W."/>
            <person name="Rogers J.C."/>
        </authorList>
    </citation>
    <scope>NUCLEOTIDE SEQUENCE [MRNA]</scope>
</reference>
<reference key="2">
    <citation type="journal article" date="1998" name="DNA Res.">
        <title>Structural analysis of Arabidopsis thaliana chromosome 5. V. Sequence features of the regions of 1,381,565 bp covered by twenty one physically assigned P1 and TAC clones.</title>
        <authorList>
            <person name="Kaneko T."/>
            <person name="Kotani H."/>
            <person name="Nakamura Y."/>
            <person name="Sato S."/>
            <person name="Asamizu E."/>
            <person name="Miyajima N."/>
            <person name="Tabata S."/>
        </authorList>
    </citation>
    <scope>NUCLEOTIDE SEQUENCE [LARGE SCALE GENOMIC DNA]</scope>
    <source>
        <strain>cv. Columbia</strain>
    </source>
</reference>
<reference key="3">
    <citation type="journal article" date="2017" name="Plant J.">
        <title>Araport11: a complete reannotation of the Arabidopsis thaliana reference genome.</title>
        <authorList>
            <person name="Cheng C.Y."/>
            <person name="Krishnakumar V."/>
            <person name="Chan A.P."/>
            <person name="Thibaud-Nissen F."/>
            <person name="Schobel S."/>
            <person name="Town C.D."/>
        </authorList>
    </citation>
    <scope>GENOME REANNOTATION</scope>
    <source>
        <strain>cv. Columbia</strain>
    </source>
</reference>
<reference key="4">
    <citation type="journal article" date="2003" name="Science">
        <title>Empirical analysis of transcriptional activity in the Arabidopsis genome.</title>
        <authorList>
            <person name="Yamada K."/>
            <person name="Lim J."/>
            <person name="Dale J.M."/>
            <person name="Chen H."/>
            <person name="Shinn P."/>
            <person name="Palm C.J."/>
            <person name="Southwick A.M."/>
            <person name="Wu H.C."/>
            <person name="Kim C.J."/>
            <person name="Nguyen M."/>
            <person name="Pham P.K."/>
            <person name="Cheuk R.F."/>
            <person name="Karlin-Newmann G."/>
            <person name="Liu S.X."/>
            <person name="Lam B."/>
            <person name="Sakano H."/>
            <person name="Wu T."/>
            <person name="Yu G."/>
            <person name="Miranda M."/>
            <person name="Quach H.L."/>
            <person name="Tripp M."/>
            <person name="Chang C.H."/>
            <person name="Lee J.M."/>
            <person name="Toriumi M.J."/>
            <person name="Chan M.M."/>
            <person name="Tang C.C."/>
            <person name="Onodera C.S."/>
            <person name="Deng J.M."/>
            <person name="Akiyama K."/>
            <person name="Ansari Y."/>
            <person name="Arakawa T."/>
            <person name="Banh J."/>
            <person name="Banno F."/>
            <person name="Bowser L."/>
            <person name="Brooks S.Y."/>
            <person name="Carninci P."/>
            <person name="Chao Q."/>
            <person name="Choy N."/>
            <person name="Enju A."/>
            <person name="Goldsmith A.D."/>
            <person name="Gurjal M."/>
            <person name="Hansen N.F."/>
            <person name="Hayashizaki Y."/>
            <person name="Johnson-Hopson C."/>
            <person name="Hsuan V.W."/>
            <person name="Iida K."/>
            <person name="Karnes M."/>
            <person name="Khan S."/>
            <person name="Koesema E."/>
            <person name="Ishida J."/>
            <person name="Jiang P.X."/>
            <person name="Jones T."/>
            <person name="Kawai J."/>
            <person name="Kamiya A."/>
            <person name="Meyers C."/>
            <person name="Nakajima M."/>
            <person name="Narusaka M."/>
            <person name="Seki M."/>
            <person name="Sakurai T."/>
            <person name="Satou M."/>
            <person name="Tamse R."/>
            <person name="Vaysberg M."/>
            <person name="Wallender E.K."/>
            <person name="Wong C."/>
            <person name="Yamamura Y."/>
            <person name="Yuan S."/>
            <person name="Shinozaki K."/>
            <person name="Davis R.W."/>
            <person name="Theologis A."/>
            <person name="Ecker J.R."/>
        </authorList>
    </citation>
    <scope>NUCLEOTIDE SEQUENCE [LARGE SCALE MRNA]</scope>
    <source>
        <strain>cv. Columbia</strain>
    </source>
</reference>
<reference key="5">
    <citation type="journal article" date="2005" name="J. Cell Biol.">
        <title>AtRMR1 functions as a cargo receptor for protein trafficking to the protein storage vacuole.</title>
        <authorList>
            <person name="Park M."/>
            <person name="Lee D."/>
            <person name="Lee G.J."/>
            <person name="Hwang I."/>
        </authorList>
    </citation>
    <scope>FUNCTION</scope>
    <scope>SUBCELLULAR LOCATION</scope>
    <scope>TISSUE SPECIFICITY</scope>
</reference>
<reference key="6">
    <citation type="journal article" date="2007" name="Plant Sci.">
        <title>Golgi-mediated vacuolar sorting in plant cells: RMR proteins are sorting receptors for the protein aggregation/membrane internalization pathway.</title>
        <authorList>
            <person name="Park J.H."/>
            <person name="Oufattole M."/>
            <person name="Rogers J.C."/>
        </authorList>
    </citation>
    <scope>FUNCTION</scope>
</reference>
<reference key="7">
    <citation type="journal article" date="2007" name="Traffic">
        <title>Localization of vacuolar transport receptors and cargo proteins in the Golgi apparatus of developing Arabidopsis embryos.</title>
        <authorList>
            <person name="Hinz G."/>
            <person name="Colanesi S."/>
            <person name="Hillmer S."/>
            <person name="Rogers J.C."/>
            <person name="Robinson D.G."/>
        </authorList>
    </citation>
    <scope>FUNCTION</scope>
    <scope>SUBCELLULAR LOCATION</scope>
</reference>
<sequence length="310" mass="34429">MRLVVSSCLLVAAPFLSSLLRVSLATVVLNSISASFADLPAKFDGSVTKNGICGALYVADPLDGCSPLLHAAASNWTQHRTTKFALIIRGECSFEDKLLNAQNSGFQAVIVYDNIDNEDLIVMKVNPQDITVDAVFVSNVAGEILRKYARGRDGECCLNPPDRGSAWTVLAISFFSLLLIVTFLLIAFFAPRHWTQWRGRHTRTIRLDAKLVHTLPCFTFTDSAHHKAGETCAICLEDYRFGESLRLLPCQHAFHLNCIDSWLTKWGTSCPVCKHDIRTETMSSEVHKRESPRTDTSTSRFAFAQSSQSR</sequence>
<proteinExistence type="evidence at protein level"/>
<evidence type="ECO:0000255" key="1"/>
<evidence type="ECO:0000255" key="2">
    <source>
        <dbReference type="PROSITE-ProRule" id="PRU00175"/>
    </source>
</evidence>
<evidence type="ECO:0000256" key="3">
    <source>
        <dbReference type="SAM" id="MobiDB-lite"/>
    </source>
</evidence>
<evidence type="ECO:0000269" key="4">
    <source>
    </source>
</evidence>
<evidence type="ECO:0000269" key="5">
    <source>
    </source>
</evidence>
<evidence type="ECO:0000269" key="6">
    <source ref="6"/>
</evidence>
<evidence type="ECO:0000305" key="7"/>
<evidence type="ECO:0007829" key="8">
    <source>
        <dbReference type="PDB" id="7BVW"/>
    </source>
</evidence>
<feature type="signal peptide" evidence="1">
    <location>
        <begin position="1"/>
        <end position="25"/>
    </location>
</feature>
<feature type="chain" id="PRO_0000425113" description="Receptor homology region, transmembrane domain- and RING domain-containing protein 1">
    <location>
        <begin position="26"/>
        <end position="310"/>
    </location>
</feature>
<feature type="topological domain" description="Lumenal" evidence="1">
    <location>
        <begin position="26"/>
        <end position="168"/>
    </location>
</feature>
<feature type="transmembrane region" description="Helical" evidence="1">
    <location>
        <begin position="169"/>
        <end position="189"/>
    </location>
</feature>
<feature type="topological domain" description="Cytoplasmic" evidence="1">
    <location>
        <begin position="190"/>
        <end position="310"/>
    </location>
</feature>
<feature type="domain" description="PA">
    <location>
        <begin position="81"/>
        <end position="149"/>
    </location>
</feature>
<feature type="zinc finger region" description="RING-type; atypical" evidence="2">
    <location>
        <begin position="232"/>
        <end position="274"/>
    </location>
</feature>
<feature type="region of interest" description="Disordered" evidence="3">
    <location>
        <begin position="284"/>
        <end position="310"/>
    </location>
</feature>
<feature type="compositionally biased region" description="Basic and acidic residues" evidence="3">
    <location>
        <begin position="284"/>
        <end position="293"/>
    </location>
</feature>
<feature type="compositionally biased region" description="Polar residues" evidence="3">
    <location>
        <begin position="294"/>
        <end position="310"/>
    </location>
</feature>
<feature type="glycosylation site" description="N-linked (GlcNAc...) asparagine" evidence="1">
    <location>
        <position position="75"/>
    </location>
</feature>
<feature type="disulfide bond" evidence="1">
    <location>
        <begin position="65"/>
        <end position="92"/>
    </location>
</feature>
<feature type="helix" evidence="8">
    <location>
        <begin position="209"/>
        <end position="212"/>
    </location>
</feature>
<feature type="strand" evidence="8">
    <location>
        <begin position="217"/>
        <end position="219"/>
    </location>
</feature>
<feature type="helix" evidence="8">
    <location>
        <begin position="222"/>
        <end position="228"/>
    </location>
</feature>
<feature type="turn" evidence="8">
    <location>
        <begin position="233"/>
        <end position="235"/>
    </location>
</feature>
<feature type="strand" evidence="8">
    <location>
        <begin position="244"/>
        <end position="247"/>
    </location>
</feature>
<feature type="strand" evidence="8">
    <location>
        <begin position="253"/>
        <end position="255"/>
    </location>
</feature>
<feature type="helix" evidence="8">
    <location>
        <begin position="256"/>
        <end position="265"/>
    </location>
</feature>
<feature type="turn" evidence="8">
    <location>
        <begin position="271"/>
        <end position="273"/>
    </location>
</feature>